<gene>
    <name type="primary">KCNMB2</name>
</gene>
<name>KCMB2_HUMAN</name>
<organism>
    <name type="scientific">Homo sapiens</name>
    <name type="common">Human</name>
    <dbReference type="NCBI Taxonomy" id="9606"/>
    <lineage>
        <taxon>Eukaryota</taxon>
        <taxon>Metazoa</taxon>
        <taxon>Chordata</taxon>
        <taxon>Craniata</taxon>
        <taxon>Vertebrata</taxon>
        <taxon>Euteleostomi</taxon>
        <taxon>Mammalia</taxon>
        <taxon>Eutheria</taxon>
        <taxon>Euarchontoglires</taxon>
        <taxon>Primates</taxon>
        <taxon>Haplorrhini</taxon>
        <taxon>Catarrhini</taxon>
        <taxon>Hominidae</taxon>
        <taxon>Homo</taxon>
    </lineage>
</organism>
<protein>
    <recommendedName>
        <fullName>Calcium-activated potassium channel subunit beta-2</fullName>
    </recommendedName>
    <alternativeName>
        <fullName>BK channel subunit beta-2</fullName>
        <shortName>BKbeta2</shortName>
        <shortName>Hbeta2</shortName>
    </alternativeName>
    <alternativeName>
        <fullName>Calcium-activated potassium channel, subfamily M subunit beta-2</fullName>
    </alternativeName>
    <alternativeName>
        <fullName>Charybdotoxin receptor subunit beta-2</fullName>
    </alternativeName>
    <alternativeName>
        <fullName>Hbeta3</fullName>
    </alternativeName>
    <alternativeName>
        <fullName>K(VCA)beta-2</fullName>
    </alternativeName>
    <alternativeName>
        <fullName>Maxi K channel subunit beta-2</fullName>
    </alternativeName>
    <alternativeName>
        <fullName>Slo-beta-2</fullName>
    </alternativeName>
</protein>
<proteinExistence type="evidence at protein level"/>
<feature type="chain" id="PRO_0000187051" description="Calcium-activated potassium channel subunit beta-2">
    <location>
        <begin position="1"/>
        <end position="235"/>
    </location>
</feature>
<feature type="topological domain" description="Cytoplasmic" evidence="1">
    <location>
        <begin position="1"/>
        <end position="46"/>
    </location>
</feature>
<feature type="transmembrane region" description="Helical; Name=1" evidence="1">
    <location>
        <begin position="47"/>
        <end position="67"/>
    </location>
</feature>
<feature type="topological domain" description="Extracellular" evidence="1">
    <location>
        <begin position="68"/>
        <end position="194"/>
    </location>
</feature>
<feature type="transmembrane region" description="Helical; Name=2" evidence="1">
    <location>
        <begin position="195"/>
        <end position="215"/>
    </location>
</feature>
<feature type="topological domain" description="Cytoplasmic" evidence="1">
    <location>
        <begin position="216"/>
        <end position="235"/>
    </location>
</feature>
<feature type="region of interest" description="Ball and chain">
    <location>
        <begin position="1"/>
        <end position="45"/>
    </location>
</feature>
<feature type="glycosylation site" description="N-linked (GlcNAc...) asparagine" evidence="1">
    <location>
        <position position="88"/>
    </location>
</feature>
<feature type="glycosylation site" description="N-linked (GlcNAc...) asparagine" evidence="1">
    <location>
        <position position="96"/>
    </location>
</feature>
<feature type="glycosylation site" description="N-linked (GlcNAc...) asparagine" evidence="1">
    <location>
        <position position="119"/>
    </location>
</feature>
<feature type="mutagenesis site" description="Abolishes inactivation of KCNMA1 channel." evidence="6">
    <original>FIW</original>
    <variation>GGG</variation>
    <location>
        <begin position="2"/>
        <end position="4"/>
    </location>
</feature>
<feature type="strand" evidence="8">
    <location>
        <begin position="12"/>
        <end position="15"/>
    </location>
</feature>
<feature type="helix" evidence="8">
    <location>
        <begin position="22"/>
        <end position="29"/>
    </location>
</feature>
<feature type="turn" evidence="8">
    <location>
        <begin position="30"/>
        <end position="32"/>
    </location>
</feature>
<feature type="strand" evidence="8">
    <location>
        <begin position="33"/>
        <end position="35"/>
    </location>
</feature>
<accession>Q9Y691</accession>
<dbReference type="EMBL" id="AF099137">
    <property type="protein sequence ID" value="AAD23380.1"/>
    <property type="molecule type" value="mRNA"/>
</dbReference>
<dbReference type="EMBL" id="AF209747">
    <property type="protein sequence ID" value="AAF36562.1"/>
    <property type="molecule type" value="mRNA"/>
</dbReference>
<dbReference type="EMBL" id="BC017825">
    <property type="protein sequence ID" value="AAH17825.1"/>
    <property type="molecule type" value="mRNA"/>
</dbReference>
<dbReference type="CCDS" id="CCDS3223.1"/>
<dbReference type="RefSeq" id="NP_001265840.1">
    <property type="nucleotide sequence ID" value="NM_001278911.2"/>
</dbReference>
<dbReference type="RefSeq" id="NP_005823.1">
    <property type="nucleotide sequence ID" value="NM_005832.5"/>
</dbReference>
<dbReference type="RefSeq" id="NP_852006.1">
    <property type="nucleotide sequence ID" value="NM_181361.3"/>
</dbReference>
<dbReference type="RefSeq" id="XP_011510627.1">
    <property type="nucleotide sequence ID" value="XM_011512325.3"/>
</dbReference>
<dbReference type="RefSeq" id="XP_054200885.1">
    <property type="nucleotide sequence ID" value="XM_054344910.1"/>
</dbReference>
<dbReference type="PDB" id="1JO6">
    <property type="method" value="NMR"/>
    <property type="chains" value="A=1-45"/>
</dbReference>
<dbReference type="PDBsum" id="1JO6"/>
<dbReference type="BMRB" id="Q9Y691"/>
<dbReference type="SMR" id="Q9Y691"/>
<dbReference type="BioGRID" id="115536">
    <property type="interactions" value="11"/>
</dbReference>
<dbReference type="FunCoup" id="Q9Y691">
    <property type="interactions" value="488"/>
</dbReference>
<dbReference type="IntAct" id="Q9Y691">
    <property type="interactions" value="11"/>
</dbReference>
<dbReference type="MINT" id="Q9Y691"/>
<dbReference type="STRING" id="9606.ENSP00000407592"/>
<dbReference type="DrugBank" id="DB03861">
    <property type="generic name" value="(2R,3R,4S,5R)-2-acetamido-3,4-dihydroxy-5-hydroxymethyl-piperidine"/>
</dbReference>
<dbReference type="DrugBank" id="DB02587">
    <property type="generic name" value="Colforsin"/>
</dbReference>
<dbReference type="DrugBank" id="DB01110">
    <property type="generic name" value="Miconazole"/>
</dbReference>
<dbReference type="DrugBank" id="DB01054">
    <property type="generic name" value="Nitrendipine"/>
</dbReference>
<dbReference type="DrugBank" id="DB00721">
    <property type="generic name" value="Procaine"/>
</dbReference>
<dbReference type="DrugBank" id="DB00867">
    <property type="generic name" value="Ritodrine"/>
</dbReference>
<dbReference type="DrugBank" id="DB09089">
    <property type="generic name" value="Trimebutine"/>
</dbReference>
<dbReference type="TCDB" id="8.A.14.1.3">
    <property type="family name" value="the ca(2+)-activated k(+) channel auxiliary subunit slowpoke-Beta (sloBeta) family"/>
</dbReference>
<dbReference type="GlyCosmos" id="Q9Y691">
    <property type="glycosylation" value="3 sites, No reported glycans"/>
</dbReference>
<dbReference type="GlyGen" id="Q9Y691">
    <property type="glycosylation" value="3 sites"/>
</dbReference>
<dbReference type="iPTMnet" id="Q9Y691"/>
<dbReference type="PhosphoSitePlus" id="Q9Y691"/>
<dbReference type="BioMuta" id="KCNMB2"/>
<dbReference type="DMDM" id="46396054"/>
<dbReference type="jPOST" id="Q9Y691"/>
<dbReference type="MassIVE" id="Q9Y691"/>
<dbReference type="PaxDb" id="9606-ENSP00000407592"/>
<dbReference type="PeptideAtlas" id="Q9Y691"/>
<dbReference type="ProteomicsDB" id="86624"/>
<dbReference type="ABCD" id="Q9Y691">
    <property type="antibodies" value="1 sequenced antibody"/>
</dbReference>
<dbReference type="Antibodypedia" id="33738">
    <property type="antibodies" value="231 antibodies from 29 providers"/>
</dbReference>
<dbReference type="DNASU" id="10242"/>
<dbReference type="Ensembl" id="ENST00000358316.7">
    <property type="protein sequence ID" value="ENSP00000351068.3"/>
    <property type="gene ID" value="ENSG00000197584.13"/>
</dbReference>
<dbReference type="Ensembl" id="ENST00000420517.6">
    <property type="protein sequence ID" value="ENSP00000408252.2"/>
    <property type="gene ID" value="ENSG00000197584.13"/>
</dbReference>
<dbReference type="Ensembl" id="ENST00000432997.5">
    <property type="protein sequence ID" value="ENSP00000407592.1"/>
    <property type="gene ID" value="ENSG00000197584.13"/>
</dbReference>
<dbReference type="Ensembl" id="ENST00000452583.6">
    <property type="protein sequence ID" value="ENSP00000397483.1"/>
    <property type="gene ID" value="ENSG00000197584.13"/>
</dbReference>
<dbReference type="GeneID" id="10242"/>
<dbReference type="KEGG" id="hsa:10242"/>
<dbReference type="MANE-Select" id="ENST00000452583.6">
    <property type="protein sequence ID" value="ENSP00000397483.1"/>
    <property type="RefSeq nucleotide sequence ID" value="NM_181361.3"/>
    <property type="RefSeq protein sequence ID" value="NP_852006.1"/>
</dbReference>
<dbReference type="UCSC" id="uc003fjd.5">
    <property type="organism name" value="human"/>
</dbReference>
<dbReference type="AGR" id="HGNC:6286"/>
<dbReference type="CTD" id="10242"/>
<dbReference type="DisGeNET" id="10242"/>
<dbReference type="GeneCards" id="KCNMB2"/>
<dbReference type="HGNC" id="HGNC:6286">
    <property type="gene designation" value="KCNMB2"/>
</dbReference>
<dbReference type="HPA" id="ENSG00000197584">
    <property type="expression patterns" value="Tissue enhanced (epididymis, fallopian tube)"/>
</dbReference>
<dbReference type="MIM" id="605214">
    <property type="type" value="gene"/>
</dbReference>
<dbReference type="neXtProt" id="NX_Q9Y691"/>
<dbReference type="OpenTargets" id="ENSG00000197584"/>
<dbReference type="OpenTargets" id="ENSG00000275163"/>
<dbReference type="PharmGKB" id="PA30066"/>
<dbReference type="VEuPathDB" id="HostDB:ENSG00000197584"/>
<dbReference type="eggNOG" id="ENOG502QSCP">
    <property type="taxonomic scope" value="Eukaryota"/>
</dbReference>
<dbReference type="GeneTree" id="ENSGT00950000183039"/>
<dbReference type="HOGENOM" id="CLU_085739_1_1_1"/>
<dbReference type="InParanoid" id="Q9Y691"/>
<dbReference type="OMA" id="ACYSDPE"/>
<dbReference type="OrthoDB" id="5962477at2759"/>
<dbReference type="PAN-GO" id="Q9Y691">
    <property type="GO annotations" value="4 GO annotations based on evolutionary models"/>
</dbReference>
<dbReference type="PhylomeDB" id="Q9Y691"/>
<dbReference type="TreeFam" id="TF328589"/>
<dbReference type="PathwayCommons" id="Q9Y691"/>
<dbReference type="Reactome" id="R-HSA-1296052">
    <property type="pathway name" value="Ca2+ activated K+ channels"/>
</dbReference>
<dbReference type="Reactome" id="R-HSA-418457">
    <property type="pathway name" value="cGMP effects"/>
</dbReference>
<dbReference type="SignaLink" id="Q9Y691"/>
<dbReference type="BioGRID-ORCS" id="10242">
    <property type="hits" value="12 hits in 1149 CRISPR screens"/>
</dbReference>
<dbReference type="ChiTaRS" id="KCNMB2">
    <property type="organism name" value="human"/>
</dbReference>
<dbReference type="EvolutionaryTrace" id="Q9Y691"/>
<dbReference type="GeneWiki" id="KCNMB2"/>
<dbReference type="GenomeRNAi" id="10242"/>
<dbReference type="Pharos" id="Q9Y691">
    <property type="development level" value="Tbio"/>
</dbReference>
<dbReference type="PRO" id="PR:Q9Y691"/>
<dbReference type="Proteomes" id="UP000005640">
    <property type="component" value="Chromosome 3"/>
</dbReference>
<dbReference type="RNAct" id="Q9Y691">
    <property type="molecule type" value="protein"/>
</dbReference>
<dbReference type="Bgee" id="ENSG00000197584">
    <property type="expression patterns" value="Expressed in islet of Langerhans and 114 other cell types or tissues"/>
</dbReference>
<dbReference type="ExpressionAtlas" id="Q9Y691">
    <property type="expression patterns" value="baseline and differential"/>
</dbReference>
<dbReference type="GO" id="GO:0005886">
    <property type="term" value="C:plasma membrane"/>
    <property type="evidence" value="ECO:0000314"/>
    <property type="project" value="UniProtKB"/>
</dbReference>
<dbReference type="GO" id="GO:0008076">
    <property type="term" value="C:voltage-gated potassium channel complex"/>
    <property type="evidence" value="ECO:0000314"/>
    <property type="project" value="UniProtKB"/>
</dbReference>
<dbReference type="GO" id="GO:0015269">
    <property type="term" value="F:calcium-activated potassium channel activity"/>
    <property type="evidence" value="ECO:0000314"/>
    <property type="project" value="UniProtKB"/>
</dbReference>
<dbReference type="GO" id="GO:0008200">
    <property type="term" value="F:ion channel inhibitor activity"/>
    <property type="evidence" value="ECO:0000304"/>
    <property type="project" value="ProtInc"/>
</dbReference>
<dbReference type="GO" id="GO:0015459">
    <property type="term" value="F:potassium channel regulator activity"/>
    <property type="evidence" value="ECO:0000318"/>
    <property type="project" value="GO_Central"/>
</dbReference>
<dbReference type="GO" id="GO:0001508">
    <property type="term" value="P:action potential"/>
    <property type="evidence" value="ECO:0000314"/>
    <property type="project" value="UniProtKB"/>
</dbReference>
<dbReference type="GO" id="GO:0005513">
    <property type="term" value="P:detection of calcium ion"/>
    <property type="evidence" value="ECO:0000314"/>
    <property type="project" value="UniProtKB"/>
</dbReference>
<dbReference type="GO" id="GO:0019228">
    <property type="term" value="P:neuronal action potential"/>
    <property type="evidence" value="ECO:0000314"/>
    <property type="project" value="UniProtKB"/>
</dbReference>
<dbReference type="GO" id="GO:0006813">
    <property type="term" value="P:potassium ion transport"/>
    <property type="evidence" value="ECO:0000314"/>
    <property type="project" value="UniProtKB"/>
</dbReference>
<dbReference type="GO" id="GO:0019229">
    <property type="term" value="P:regulation of vasoconstriction"/>
    <property type="evidence" value="ECO:0000304"/>
    <property type="project" value="UniProtKB"/>
</dbReference>
<dbReference type="FunFam" id="4.10.81.20:FF:000001">
    <property type="entry name" value="Calcium-activated potassium channel beta 2 subunit"/>
    <property type="match status" value="1"/>
</dbReference>
<dbReference type="Gene3D" id="4.10.81.20">
    <property type="entry name" value="KCNMB2, ball/chain domain"/>
    <property type="match status" value="1"/>
</dbReference>
<dbReference type="InterPro" id="IPR003930">
    <property type="entry name" value="K_chnl_Ca-activ_BK_bsu"/>
</dbReference>
<dbReference type="InterPro" id="IPR037096">
    <property type="entry name" value="KCNMB2_ball/chain_dom_sf"/>
</dbReference>
<dbReference type="InterPro" id="IPR015382">
    <property type="entry name" value="KCNMB2_ball_chain_dom"/>
</dbReference>
<dbReference type="PANTHER" id="PTHR10258">
    <property type="entry name" value="CALCIUM-ACTIVATED POTASSIUM CHANNEL SUBUNIT BETA"/>
    <property type="match status" value="1"/>
</dbReference>
<dbReference type="PANTHER" id="PTHR10258:SF5">
    <property type="entry name" value="CALCIUM-ACTIVATED POTASSIUM CHANNEL SUBUNIT BETA-2"/>
    <property type="match status" value="1"/>
</dbReference>
<dbReference type="Pfam" id="PF03185">
    <property type="entry name" value="CaKB"/>
    <property type="match status" value="1"/>
</dbReference>
<dbReference type="Pfam" id="PF09303">
    <property type="entry name" value="KcnmB2_inactiv"/>
    <property type="match status" value="1"/>
</dbReference>
<dbReference type="PRINTS" id="PR01450">
    <property type="entry name" value="BKCHANNELB"/>
</dbReference>
<reference key="1">
    <citation type="journal article" date="1999" name="Proc. Natl. Acad. Sci. U.S.A.">
        <title>Molecular basis of fast inactivation in voltage and Ca2+-activated K+ channels: a transmembrane beta-subunit homolog.</title>
        <authorList>
            <person name="Wallner M."/>
            <person name="Meera P."/>
            <person name="Toro L."/>
        </authorList>
    </citation>
    <scope>NUCLEOTIDE SEQUENCE [MRNA]</scope>
    <scope>FUNCTION</scope>
    <scope>DOMAIN</scope>
    <scope>TISSUE SPECIFICITY</scope>
    <scope>INTERACTION WITH KCNMA1</scope>
    <source>
        <tissue>Neuroepithelium</tissue>
    </source>
</reference>
<reference key="2">
    <citation type="journal article" date="2000" name="J. Biol. Chem.">
        <title>Cloning and functional characterization of novel large conductance calcium-activated potassium channel beta subunits, hKCNMB3 and hKCNMB4.</title>
        <authorList>
            <person name="Brenner R."/>
            <person name="Jegla T.J."/>
            <person name="Wickenden A."/>
            <person name="Liu Y."/>
            <person name="Aldrich R.W."/>
        </authorList>
    </citation>
    <scope>NUCLEOTIDE SEQUENCE [MRNA]</scope>
    <scope>TISSUE SPECIFICITY</scope>
    <source>
        <tissue>Ovary</tissue>
    </source>
</reference>
<reference key="3">
    <citation type="journal article" date="2004" name="Genome Res.">
        <title>The status, quality, and expansion of the NIH full-length cDNA project: the Mammalian Gene Collection (MGC).</title>
        <authorList>
            <consortium name="The MGC Project Team"/>
        </authorList>
    </citation>
    <scope>NUCLEOTIDE SEQUENCE [LARGE SCALE MRNA]</scope>
    <source>
        <tissue>Embryonic testis</tissue>
    </source>
</reference>
<reference key="4">
    <citation type="journal article" date="1999" name="J. Neurosci.">
        <title>Molecular basis for the inactivation of Ca2+- and voltage-dependent BK channels in adrenal chromaffin cells and rat insulinoma tumor cells.</title>
        <authorList>
            <person name="Xia X.-M."/>
            <person name="Ding J.-P."/>
            <person name="Lingle C.J."/>
        </authorList>
    </citation>
    <scope>FUNCTION</scope>
    <scope>DOMAIN</scope>
    <scope>TISSUE SPECIFICITY</scope>
</reference>
<reference key="5">
    <citation type="journal article" date="2000" name="Proc. Natl. Acad. Sci. U.S.A.">
        <title>A neuronal beta subunit (KCNMB4) makes the large conductance, voltage- and Ca2+-activated K+ channel resistant to charybdotoxin and iberiotoxin.</title>
        <authorList>
            <person name="Meera P."/>
            <person name="Wallner M."/>
            <person name="Toro L."/>
        </authorList>
    </citation>
    <scope>GLYCOSYLATION</scope>
</reference>
<reference key="6">
    <citation type="journal article" date="2003" name="J. Gen. Physiol.">
        <title>Inactivation of BK channels by the NH2 terminus of the beta2 auxiliary subunit: an essential role of a terminal peptide segment of three hydrophobic residues.</title>
        <authorList>
            <person name="Xia X.-M."/>
            <person name="Ding J.-P."/>
            <person name="Lingle C.J."/>
        </authorList>
    </citation>
    <scope>MUTAGENESIS OF 2-PHE--TRP-4</scope>
</reference>
<reference key="7">
    <citation type="journal article" date="2002" name="News Physiol. Sci.">
        <title>New disguises for an old channel: MaxiK channel beta-subunits.</title>
        <authorList>
            <person name="Orio P."/>
            <person name="Rojas P."/>
            <person name="Ferreira G."/>
            <person name="Latorre R."/>
        </authorList>
    </citation>
    <scope>REVIEW</scope>
</reference>
<reference key="8">
    <citation type="journal article" date="2001" name="J. Biol. Chem.">
        <title>NMR structure of the 'ball-and-chain' domain of KCNMB2, the beta 2-subunit of large conductance Ca2+- and voltage-activated potassium channels.</title>
        <authorList>
            <person name="Bentrop D."/>
            <person name="Beyermann M."/>
            <person name="Wissmann R."/>
            <person name="Fakler B."/>
        </authorList>
    </citation>
    <scope>STRUCTURE BY NMR OF 1-45</scope>
</reference>
<evidence type="ECO:0000255" key="1"/>
<evidence type="ECO:0000269" key="2">
    <source>
    </source>
</evidence>
<evidence type="ECO:0000269" key="3">
    <source>
    </source>
</evidence>
<evidence type="ECO:0000269" key="4">
    <source>
    </source>
</evidence>
<evidence type="ECO:0000269" key="5">
    <source>
    </source>
</evidence>
<evidence type="ECO:0000269" key="6">
    <source>
    </source>
</evidence>
<evidence type="ECO:0000305" key="7"/>
<evidence type="ECO:0007829" key="8">
    <source>
        <dbReference type="PDB" id="1JO6"/>
    </source>
</evidence>
<keyword id="KW-0002">3D-structure</keyword>
<keyword id="KW-0325">Glycoprotein</keyword>
<keyword id="KW-0407">Ion channel</keyword>
<keyword id="KW-0406">Ion transport</keyword>
<keyword id="KW-0472">Membrane</keyword>
<keyword id="KW-1185">Reference proteome</keyword>
<keyword id="KW-0812">Transmembrane</keyword>
<keyword id="KW-1133">Transmembrane helix</keyword>
<keyword id="KW-0813">Transport</keyword>
<sequence length="235" mass="27130">MFIWTSGRTSSSYRHDEKRNIYQKIRDHDLLDKRKTVTALKAGEDRAILLGLAMMVCSIMMYFLLGITLLRSYMQSVWTEESQCTLLNASITETFNCSFSCGPDCWKLSQYPCLQVYVNLTSSGEKLLLYHTEETIKINQKCSYIPKCGKNFEESMSLVNVVMENFRKYQHFSCYSDPEGNQKSVILTKLYSSNVLFHSLFWPTCMMAGGVAIVAMVKLTQYLSLLCERIQRINR</sequence>
<comment type="function">
    <text evidence="2 3">Regulatory subunit of the calcium activated potassium KCNMA1 (maxiK) channel. Modulates the calcium sensitivity and gating kinetics of KCNMA1, thereby contributing to KCNMA1 channel diversity. Acts as a negative regulator that confers rapid and complete inactivation of KCNMA1 channel complex. May participate in KCNMA1 inactivation in chromaffin cells of the adrenal gland or in hippocampal CA1 neurons.</text>
</comment>
<comment type="subunit">
    <text evidence="2">Interacts with KCNMA1 tetramer. There are probably 4 molecules of KCMNB2 per KCNMA1 tetramer.</text>
</comment>
<comment type="interaction">
    <interactant intactId="EBI-7932244">
        <id>Q9Y691</id>
    </interactant>
    <interactant intactId="EBI-466029">
        <id>P42858</id>
        <label>HTT</label>
    </interactant>
    <organismsDiffer>false</organismsDiffer>
    <experiments>3</experiments>
</comment>
<comment type="interaction">
    <interactant intactId="EBI-7932244">
        <id>Q9Y691</id>
    </interactant>
    <interactant intactId="EBI-720609">
        <id>O76024</id>
        <label>WFS1</label>
    </interactant>
    <organismsDiffer>false</organismsDiffer>
    <experiments>3</experiments>
</comment>
<comment type="subcellular location">
    <subcellularLocation>
        <location>Membrane</location>
        <topology>Multi-pass membrane protein</topology>
    </subcellularLocation>
</comment>
<comment type="tissue specificity">
    <text evidence="2 3 4">Expressed in kidney, heart and brain. Highly expressed in ovary. Expressed at low level in other tissues.</text>
</comment>
<comment type="domain">
    <text evidence="2 3">The ball and chain domain mediates the inactivation of KCNMA1. It occludes the conduction pathway of KCNMA1 channels, and comprises the pore-blocking ball domain (residues 1-17) and the chain domain (residues 20-45) linking it to the transmembrane segment. The ball domain is made up of a flexible N-terminus anchored at a well ordered loop-helix motif. The chain domain consists of a 4-turn helix with an unfolded linker at its C-terminus.</text>
</comment>
<comment type="PTM">
    <text evidence="5">N-glycosylated.</text>
</comment>
<comment type="similarity">
    <text evidence="7">Belongs to the KCNMB (TC 8.A.14.1) family. KCNMB2 subfamily.</text>
</comment>